<protein>
    <recommendedName>
        <fullName evidence="1">Transcriptional repressor NrdR</fullName>
    </recommendedName>
</protein>
<accession>Q1IJA9</accession>
<organism>
    <name type="scientific">Koribacter versatilis (strain Ellin345)</name>
    <dbReference type="NCBI Taxonomy" id="204669"/>
    <lineage>
        <taxon>Bacteria</taxon>
        <taxon>Pseudomonadati</taxon>
        <taxon>Acidobacteriota</taxon>
        <taxon>Terriglobia</taxon>
        <taxon>Terriglobales</taxon>
        <taxon>Candidatus Korobacteraceae</taxon>
        <taxon>Candidatus Korobacter</taxon>
    </lineage>
</organism>
<feature type="chain" id="PRO_0000264156" description="Transcriptional repressor NrdR">
    <location>
        <begin position="1"/>
        <end position="163"/>
    </location>
</feature>
<feature type="domain" description="ATP-cone" evidence="1">
    <location>
        <begin position="49"/>
        <end position="139"/>
    </location>
</feature>
<feature type="zinc finger region" evidence="1">
    <location>
        <begin position="3"/>
        <end position="34"/>
    </location>
</feature>
<evidence type="ECO:0000255" key="1">
    <source>
        <dbReference type="HAMAP-Rule" id="MF_00440"/>
    </source>
</evidence>
<comment type="function">
    <text evidence="1">Negatively regulates transcription of bacterial ribonucleotide reductase nrd genes and operons by binding to NrdR-boxes.</text>
</comment>
<comment type="cofactor">
    <cofactor evidence="1">
        <name>Zn(2+)</name>
        <dbReference type="ChEBI" id="CHEBI:29105"/>
    </cofactor>
    <text evidence="1">Binds 1 zinc ion.</text>
</comment>
<comment type="similarity">
    <text evidence="1">Belongs to the NrdR family.</text>
</comment>
<reference key="1">
    <citation type="journal article" date="2009" name="Appl. Environ. Microbiol.">
        <title>Three genomes from the phylum Acidobacteria provide insight into the lifestyles of these microorganisms in soils.</title>
        <authorList>
            <person name="Ward N.L."/>
            <person name="Challacombe J.F."/>
            <person name="Janssen P.H."/>
            <person name="Henrissat B."/>
            <person name="Coutinho P.M."/>
            <person name="Wu M."/>
            <person name="Xie G."/>
            <person name="Haft D.H."/>
            <person name="Sait M."/>
            <person name="Badger J."/>
            <person name="Barabote R.D."/>
            <person name="Bradley B."/>
            <person name="Brettin T.S."/>
            <person name="Brinkac L.M."/>
            <person name="Bruce D."/>
            <person name="Creasy T."/>
            <person name="Daugherty S.C."/>
            <person name="Davidsen T.M."/>
            <person name="DeBoy R.T."/>
            <person name="Detter J.C."/>
            <person name="Dodson R.J."/>
            <person name="Durkin A.S."/>
            <person name="Ganapathy A."/>
            <person name="Gwinn-Giglio M."/>
            <person name="Han C.S."/>
            <person name="Khouri H."/>
            <person name="Kiss H."/>
            <person name="Kothari S.P."/>
            <person name="Madupu R."/>
            <person name="Nelson K.E."/>
            <person name="Nelson W.C."/>
            <person name="Paulsen I."/>
            <person name="Penn K."/>
            <person name="Ren Q."/>
            <person name="Rosovitz M.J."/>
            <person name="Selengut J.D."/>
            <person name="Shrivastava S."/>
            <person name="Sullivan S.A."/>
            <person name="Tapia R."/>
            <person name="Thompson L.S."/>
            <person name="Watkins K.L."/>
            <person name="Yang Q."/>
            <person name="Yu C."/>
            <person name="Zafar N."/>
            <person name="Zhou L."/>
            <person name="Kuske C.R."/>
        </authorList>
    </citation>
    <scope>NUCLEOTIDE SEQUENCE [LARGE SCALE GENOMIC DNA]</scope>
    <source>
        <strain>Ellin345</strain>
    </source>
</reference>
<proteinExistence type="inferred from homology"/>
<name>NRDR_KORVE</name>
<sequence length="163" mass="19238">MRCPFCAHPEDKVVDSRESKEGESIRRRRECLKCEKRFTTYERIDEIPYMVVKKDGRRERFDRQKVLNGLMRACEKRPVSIGKLEAIVNEAETFVIDSPERERRTSEIGQLIMEHLKKYDKVAYVRFASVYLDFKDVREFLSELQDLLNHKDPAAVATVKPIK</sequence>
<dbReference type="EMBL" id="CP000360">
    <property type="protein sequence ID" value="ABF43041.1"/>
    <property type="molecule type" value="Genomic_DNA"/>
</dbReference>
<dbReference type="RefSeq" id="WP_011524840.1">
    <property type="nucleotide sequence ID" value="NC_008009.1"/>
</dbReference>
<dbReference type="SMR" id="Q1IJA9"/>
<dbReference type="STRING" id="204669.Acid345_4041"/>
<dbReference type="EnsemblBacteria" id="ABF43041">
    <property type="protein sequence ID" value="ABF43041"/>
    <property type="gene ID" value="Acid345_4041"/>
</dbReference>
<dbReference type="KEGG" id="aba:Acid345_4041"/>
<dbReference type="eggNOG" id="COG1327">
    <property type="taxonomic scope" value="Bacteria"/>
</dbReference>
<dbReference type="HOGENOM" id="CLU_108412_0_0_0"/>
<dbReference type="OrthoDB" id="9807461at2"/>
<dbReference type="Proteomes" id="UP000002432">
    <property type="component" value="Chromosome"/>
</dbReference>
<dbReference type="GO" id="GO:0005524">
    <property type="term" value="F:ATP binding"/>
    <property type="evidence" value="ECO:0007669"/>
    <property type="project" value="UniProtKB-KW"/>
</dbReference>
<dbReference type="GO" id="GO:0003677">
    <property type="term" value="F:DNA binding"/>
    <property type="evidence" value="ECO:0007669"/>
    <property type="project" value="UniProtKB-KW"/>
</dbReference>
<dbReference type="GO" id="GO:0008270">
    <property type="term" value="F:zinc ion binding"/>
    <property type="evidence" value="ECO:0007669"/>
    <property type="project" value="UniProtKB-UniRule"/>
</dbReference>
<dbReference type="GO" id="GO:0045892">
    <property type="term" value="P:negative regulation of DNA-templated transcription"/>
    <property type="evidence" value="ECO:0007669"/>
    <property type="project" value="UniProtKB-UniRule"/>
</dbReference>
<dbReference type="HAMAP" id="MF_00440">
    <property type="entry name" value="NrdR"/>
    <property type="match status" value="1"/>
</dbReference>
<dbReference type="InterPro" id="IPR005144">
    <property type="entry name" value="ATP-cone_dom"/>
</dbReference>
<dbReference type="InterPro" id="IPR055173">
    <property type="entry name" value="NrdR-like_N"/>
</dbReference>
<dbReference type="InterPro" id="IPR003796">
    <property type="entry name" value="RNR_NrdR-like"/>
</dbReference>
<dbReference type="NCBIfam" id="TIGR00244">
    <property type="entry name" value="transcriptional regulator NrdR"/>
    <property type="match status" value="1"/>
</dbReference>
<dbReference type="PANTHER" id="PTHR30455">
    <property type="entry name" value="TRANSCRIPTIONAL REPRESSOR NRDR"/>
    <property type="match status" value="1"/>
</dbReference>
<dbReference type="PANTHER" id="PTHR30455:SF2">
    <property type="entry name" value="TRANSCRIPTIONAL REPRESSOR NRDR"/>
    <property type="match status" value="1"/>
</dbReference>
<dbReference type="Pfam" id="PF03477">
    <property type="entry name" value="ATP-cone"/>
    <property type="match status" value="1"/>
</dbReference>
<dbReference type="Pfam" id="PF22811">
    <property type="entry name" value="Zn_ribbon_NrdR"/>
    <property type="match status" value="1"/>
</dbReference>
<dbReference type="PROSITE" id="PS51161">
    <property type="entry name" value="ATP_CONE"/>
    <property type="match status" value="1"/>
</dbReference>
<keyword id="KW-0067">ATP-binding</keyword>
<keyword id="KW-0238">DNA-binding</keyword>
<keyword id="KW-0479">Metal-binding</keyword>
<keyword id="KW-0547">Nucleotide-binding</keyword>
<keyword id="KW-1185">Reference proteome</keyword>
<keyword id="KW-0678">Repressor</keyword>
<keyword id="KW-0804">Transcription</keyword>
<keyword id="KW-0805">Transcription regulation</keyword>
<keyword id="KW-0862">Zinc</keyword>
<keyword id="KW-0863">Zinc-finger</keyword>
<gene>
    <name evidence="1" type="primary">nrdR</name>
    <name type="ordered locus">Acid345_4041</name>
</gene>